<feature type="chain" id="PRO_0000117371" description="NADH-ubiquinone oxidoreductase chain 1">
    <location>
        <begin position="1"/>
        <end position="318"/>
    </location>
</feature>
<feature type="transmembrane region" description="Helical" evidence="2">
    <location>
        <begin position="2"/>
        <end position="22"/>
    </location>
</feature>
<feature type="transmembrane region" description="Helical" evidence="2">
    <location>
        <begin position="68"/>
        <end position="88"/>
    </location>
</feature>
<feature type="transmembrane region" description="Helical" evidence="2">
    <location>
        <begin position="100"/>
        <end position="120"/>
    </location>
</feature>
<feature type="transmembrane region" description="Helical" evidence="2">
    <location>
        <begin position="146"/>
        <end position="166"/>
    </location>
</feature>
<feature type="transmembrane region" description="Helical" evidence="2">
    <location>
        <begin position="171"/>
        <end position="191"/>
    </location>
</feature>
<feature type="transmembrane region" description="Helical" evidence="2">
    <location>
        <begin position="222"/>
        <end position="242"/>
    </location>
</feature>
<feature type="transmembrane region" description="Helical" evidence="2">
    <location>
        <begin position="253"/>
        <end position="273"/>
    </location>
</feature>
<feature type="transmembrane region" description="Helical" evidence="2">
    <location>
        <begin position="294"/>
        <end position="314"/>
    </location>
</feature>
<reference key="1">
    <citation type="journal article" date="2002" name="J. Mol. Evol.">
        <title>Intra- and interfamily relationships of Vespertilionidae inferred by various molecular markers including SINE insertion data.</title>
        <authorList>
            <person name="Kawai K."/>
            <person name="Nikaido M."/>
            <person name="Harada M."/>
            <person name="Matsumura S."/>
            <person name="Lin L.K."/>
            <person name="Wu Y."/>
            <person name="Hasegawa M."/>
            <person name="Okada N."/>
        </authorList>
    </citation>
    <scope>NUCLEOTIDE SEQUENCE [GENOMIC DNA]</scope>
</reference>
<comment type="function">
    <text evidence="1">Core subunit of the mitochondrial membrane respiratory chain NADH dehydrogenase (Complex I) that is believed to belong to the minimal assembly required for catalysis. Complex I functions in the transfer of electrons from NADH to the respiratory chain. The immediate electron acceptor for the enzyme is believed to be ubiquinone (By similarity).</text>
</comment>
<comment type="catalytic activity">
    <reaction>
        <text>a ubiquinone + NADH + 5 H(+)(in) = a ubiquinol + NAD(+) + 4 H(+)(out)</text>
        <dbReference type="Rhea" id="RHEA:29091"/>
        <dbReference type="Rhea" id="RHEA-COMP:9565"/>
        <dbReference type="Rhea" id="RHEA-COMP:9566"/>
        <dbReference type="ChEBI" id="CHEBI:15378"/>
        <dbReference type="ChEBI" id="CHEBI:16389"/>
        <dbReference type="ChEBI" id="CHEBI:17976"/>
        <dbReference type="ChEBI" id="CHEBI:57540"/>
        <dbReference type="ChEBI" id="CHEBI:57945"/>
        <dbReference type="EC" id="7.1.1.2"/>
    </reaction>
</comment>
<comment type="subcellular location">
    <subcellularLocation>
        <location evidence="1">Mitochondrion inner membrane</location>
        <topology evidence="1">Multi-pass membrane protein</topology>
    </subcellularLocation>
</comment>
<comment type="similarity">
    <text evidence="3">Belongs to the complex I subunit 1 family.</text>
</comment>
<accession>Q8M896</accession>
<keyword id="KW-0249">Electron transport</keyword>
<keyword id="KW-0472">Membrane</keyword>
<keyword id="KW-0496">Mitochondrion</keyword>
<keyword id="KW-0999">Mitochondrion inner membrane</keyword>
<keyword id="KW-0520">NAD</keyword>
<keyword id="KW-0679">Respiratory chain</keyword>
<keyword id="KW-1278">Translocase</keyword>
<keyword id="KW-0812">Transmembrane</keyword>
<keyword id="KW-1133">Transmembrane helix</keyword>
<keyword id="KW-0813">Transport</keyword>
<keyword id="KW-0830">Ubiquinone</keyword>
<sequence>MFMINLLLTIVPILLAVAFLTLVERKVLGYMQLRKGPNVVGPYGLLQPIADAVKLFTKEPLRPLTSSITMFIIAPILALTLALTMWTPLPMPHPLINMNLGVLFMLAMSSLAVYSILWSGWASNSKYALIGALRAVAQTISYEVTLAIILLSVLLLSGSFALPALITTQEHMWLIIPSWPLAMMWFISTLAETNRAPFDLTEGESELVSGFNVEYAGGPFALFFLAEYANIIMMNIFTTILFLGAFHNPLMPELYTINFALKATLLTISFLWVRASYPRFRYDQLMHLLWKNFLPLTLALCMWHVTMPIITAGIPPQT</sequence>
<protein>
    <recommendedName>
        <fullName>NADH-ubiquinone oxidoreductase chain 1</fullName>
        <ecNumber>7.1.1.2</ecNumber>
    </recommendedName>
    <alternativeName>
        <fullName>NADH dehydrogenase subunit 1</fullName>
    </alternativeName>
</protein>
<geneLocation type="mitochondrion"/>
<name>NU1M_COEFR</name>
<dbReference type="EC" id="7.1.1.2"/>
<dbReference type="EMBL" id="AB079804">
    <property type="protein sequence ID" value="BAB92029.1"/>
    <property type="molecule type" value="Genomic_DNA"/>
</dbReference>
<dbReference type="SMR" id="Q8M896"/>
<dbReference type="GO" id="GO:0005743">
    <property type="term" value="C:mitochondrial inner membrane"/>
    <property type="evidence" value="ECO:0007669"/>
    <property type="project" value="UniProtKB-SubCell"/>
</dbReference>
<dbReference type="GO" id="GO:0008137">
    <property type="term" value="F:NADH dehydrogenase (ubiquinone) activity"/>
    <property type="evidence" value="ECO:0007669"/>
    <property type="project" value="UniProtKB-EC"/>
</dbReference>
<dbReference type="GO" id="GO:0009060">
    <property type="term" value="P:aerobic respiration"/>
    <property type="evidence" value="ECO:0007669"/>
    <property type="project" value="TreeGrafter"/>
</dbReference>
<dbReference type="HAMAP" id="MF_01350">
    <property type="entry name" value="NDH1_NuoH"/>
    <property type="match status" value="1"/>
</dbReference>
<dbReference type="InterPro" id="IPR001694">
    <property type="entry name" value="NADH_UbQ_OxRdtase_su1/FPO"/>
</dbReference>
<dbReference type="InterPro" id="IPR018086">
    <property type="entry name" value="NADH_UbQ_OxRdtase_su1_CS"/>
</dbReference>
<dbReference type="PANTHER" id="PTHR11432">
    <property type="entry name" value="NADH DEHYDROGENASE SUBUNIT 1"/>
    <property type="match status" value="1"/>
</dbReference>
<dbReference type="PANTHER" id="PTHR11432:SF3">
    <property type="entry name" value="NADH-UBIQUINONE OXIDOREDUCTASE CHAIN 1"/>
    <property type="match status" value="1"/>
</dbReference>
<dbReference type="Pfam" id="PF00146">
    <property type="entry name" value="NADHdh"/>
    <property type="match status" value="1"/>
</dbReference>
<dbReference type="PROSITE" id="PS00667">
    <property type="entry name" value="COMPLEX1_ND1_1"/>
    <property type="match status" value="1"/>
</dbReference>
<dbReference type="PROSITE" id="PS00668">
    <property type="entry name" value="COMPLEX1_ND1_2"/>
    <property type="match status" value="1"/>
</dbReference>
<organism>
    <name type="scientific">Coelops frithii</name>
    <name type="common">East Asian tailless leaf-nosed bat</name>
    <dbReference type="NCBI Taxonomy" id="187002"/>
    <lineage>
        <taxon>Eukaryota</taxon>
        <taxon>Metazoa</taxon>
        <taxon>Chordata</taxon>
        <taxon>Craniata</taxon>
        <taxon>Vertebrata</taxon>
        <taxon>Euteleostomi</taxon>
        <taxon>Mammalia</taxon>
        <taxon>Eutheria</taxon>
        <taxon>Laurasiatheria</taxon>
        <taxon>Chiroptera</taxon>
        <taxon>Yinpterochiroptera</taxon>
        <taxon>Rhinolophoidea</taxon>
        <taxon>Hipposideridae</taxon>
        <taxon>Coelops</taxon>
    </lineage>
</organism>
<gene>
    <name type="primary">MT-ND1</name>
    <name type="synonym">MTND1</name>
    <name type="synonym">NADH1</name>
    <name type="synonym">ND1</name>
</gene>
<proteinExistence type="inferred from homology"/>
<evidence type="ECO:0000250" key="1"/>
<evidence type="ECO:0000255" key="2"/>
<evidence type="ECO:0000305" key="3"/>